<dbReference type="EMBL" id="X85373">
    <property type="protein sequence ID" value="CAA59689.1"/>
    <property type="molecule type" value="mRNA"/>
</dbReference>
<dbReference type="EMBL" id="CR456918">
    <property type="protein sequence ID" value="CAG33199.1"/>
    <property type="molecule type" value="mRNA"/>
</dbReference>
<dbReference type="EMBL" id="AC079338">
    <property type="protein sequence ID" value="AAX81996.1"/>
    <property type="molecule type" value="Genomic_DNA"/>
</dbReference>
<dbReference type="EMBL" id="CH471053">
    <property type="protein sequence ID" value="EAW99817.1"/>
    <property type="molecule type" value="Genomic_DNA"/>
</dbReference>
<dbReference type="EMBL" id="CH471053">
    <property type="protein sequence ID" value="EAW99818.1"/>
    <property type="molecule type" value="Genomic_DNA"/>
</dbReference>
<dbReference type="EMBL" id="BC000070">
    <property type="protein sequence ID" value="AAH00070.1"/>
    <property type="molecule type" value="mRNA"/>
</dbReference>
<dbReference type="EMBL" id="BC022432">
    <property type="protein sequence ID" value="AAH22432.1"/>
    <property type="molecule type" value="mRNA"/>
</dbReference>
<dbReference type="EMBL" id="BC066302">
    <property type="protein sequence ID" value="AAH66302.1"/>
    <property type="molecule type" value="mRNA"/>
</dbReference>
<dbReference type="EMBL" id="BC070166">
    <property type="protein sequence ID" value="AAH70166.1"/>
    <property type="molecule type" value="mRNA"/>
</dbReference>
<dbReference type="EMBL" id="BC071880">
    <property type="protein sequence ID" value="AAH71880.1"/>
    <property type="molecule type" value="mRNA"/>
</dbReference>
<dbReference type="EMBL" id="BC106055">
    <property type="protein sequence ID" value="AAI06056.1"/>
    <property type="molecule type" value="mRNA"/>
</dbReference>
<dbReference type="CCDS" id="CCDS1903.1"/>
<dbReference type="PIR" id="S55054">
    <property type="entry name" value="S55054"/>
</dbReference>
<dbReference type="RefSeq" id="NP_003087.1">
    <property type="nucleotide sequence ID" value="NM_003096.4"/>
</dbReference>
<dbReference type="PDB" id="3CW1">
    <property type="method" value="X-ray"/>
    <property type="resolution" value="5.49 A"/>
    <property type="chains" value="3/4/5/G=1-76"/>
</dbReference>
<dbReference type="PDB" id="3JCR">
    <property type="method" value="EM"/>
    <property type="resolution" value="7.00 A"/>
    <property type="chains" value="U/u=1-76"/>
</dbReference>
<dbReference type="PDB" id="3PGW">
    <property type="method" value="X-ray"/>
    <property type="resolution" value="4.40 A"/>
    <property type="chains" value="G/J=1-76"/>
</dbReference>
<dbReference type="PDB" id="4F7U">
    <property type="method" value="X-ray"/>
    <property type="resolution" value="1.90 A"/>
    <property type="chains" value="G/J=1-76"/>
</dbReference>
<dbReference type="PDB" id="4PJO">
    <property type="method" value="X-ray"/>
    <property type="resolution" value="3.30 A"/>
    <property type="chains" value="G/U/g/u=1-76"/>
</dbReference>
<dbReference type="PDB" id="4V98">
    <property type="method" value="X-ray"/>
    <property type="resolution" value="3.10 A"/>
    <property type="chains" value="A4/AH/AP/AX/Af/An/Av/B4/BH/BP/BX/Bf/Bn/Bv/CH/CP/CX/Cf/Cn/Cv=1-76"/>
</dbReference>
<dbReference type="PDB" id="4WZJ">
    <property type="method" value="X-ray"/>
    <property type="resolution" value="3.60 A"/>
    <property type="chains" value="AG/AN/AU/BG/BN/BU/CG/CN/CU/DG/DN/DU=1-76"/>
</dbReference>
<dbReference type="PDB" id="5MQF">
    <property type="method" value="EM"/>
    <property type="resolution" value="5.90 A"/>
    <property type="chains" value="d/k=1-76"/>
</dbReference>
<dbReference type="PDB" id="5O9Z">
    <property type="method" value="EM"/>
    <property type="resolution" value="4.50 A"/>
    <property type="chains" value="V/d/k=1-76"/>
</dbReference>
<dbReference type="PDB" id="5XJC">
    <property type="method" value="EM"/>
    <property type="resolution" value="3.60 A"/>
    <property type="chains" value="g/n=1-76"/>
</dbReference>
<dbReference type="PDB" id="5XJL">
    <property type="method" value="X-ray"/>
    <property type="resolution" value="2.50 A"/>
    <property type="chains" value="G=1-76"/>
</dbReference>
<dbReference type="PDB" id="5XJQ">
    <property type="method" value="X-ray"/>
    <property type="resolution" value="3.28 A"/>
    <property type="chains" value="G=1-76"/>
</dbReference>
<dbReference type="PDB" id="5XJR">
    <property type="method" value="X-ray"/>
    <property type="resolution" value="3.12 A"/>
    <property type="chains" value="G=1-76"/>
</dbReference>
<dbReference type="PDB" id="5XJT">
    <property type="method" value="X-ray"/>
    <property type="resolution" value="2.92 A"/>
    <property type="chains" value="G=1-76"/>
</dbReference>
<dbReference type="PDB" id="5XJU">
    <property type="method" value="X-ray"/>
    <property type="resolution" value="2.58 A"/>
    <property type="chains" value="G=1-76"/>
</dbReference>
<dbReference type="PDB" id="5YZG">
    <property type="method" value="EM"/>
    <property type="resolution" value="4.10 A"/>
    <property type="chains" value="g/n=1-76"/>
</dbReference>
<dbReference type="PDB" id="5Z56">
    <property type="method" value="EM"/>
    <property type="resolution" value="5.10 A"/>
    <property type="chains" value="g/n=1-76"/>
</dbReference>
<dbReference type="PDB" id="5Z57">
    <property type="method" value="EM"/>
    <property type="resolution" value="6.50 A"/>
    <property type="chains" value="g/n=1-76"/>
</dbReference>
<dbReference type="PDB" id="5Z58">
    <property type="method" value="EM"/>
    <property type="resolution" value="4.90 A"/>
    <property type="chains" value="g/n=1-76"/>
</dbReference>
<dbReference type="PDB" id="6AH0">
    <property type="method" value="EM"/>
    <property type="resolution" value="5.70 A"/>
    <property type="chains" value="S/d/n=1-76"/>
</dbReference>
<dbReference type="PDB" id="6AHD">
    <property type="method" value="EM"/>
    <property type="resolution" value="3.80 A"/>
    <property type="chains" value="S/f/n=1-76"/>
</dbReference>
<dbReference type="PDB" id="6FF7">
    <property type="method" value="EM"/>
    <property type="resolution" value="4.50 A"/>
    <property type="chains" value="d/k=1-76"/>
</dbReference>
<dbReference type="PDB" id="6ICZ">
    <property type="method" value="EM"/>
    <property type="resolution" value="3.00 A"/>
    <property type="chains" value="g/n=1-76"/>
</dbReference>
<dbReference type="PDB" id="6ID0">
    <property type="method" value="EM"/>
    <property type="resolution" value="2.90 A"/>
    <property type="chains" value="g/n=1-76"/>
</dbReference>
<dbReference type="PDB" id="6ID1">
    <property type="method" value="EM"/>
    <property type="resolution" value="2.86 A"/>
    <property type="chains" value="g/n=1-76"/>
</dbReference>
<dbReference type="PDB" id="6QDV">
    <property type="method" value="EM"/>
    <property type="resolution" value="3.30 A"/>
    <property type="chains" value="g/r=4-76"/>
</dbReference>
<dbReference type="PDB" id="6QW6">
    <property type="method" value="EM"/>
    <property type="resolution" value="2.92 A"/>
    <property type="chains" value="4g/5g=1-76"/>
</dbReference>
<dbReference type="PDB" id="6QX9">
    <property type="method" value="EM"/>
    <property type="resolution" value="3.28 A"/>
    <property type="chains" value="1g/2g/4g/5g=1-76"/>
</dbReference>
<dbReference type="PDB" id="6V4X">
    <property type="method" value="EM"/>
    <property type="resolution" value="3.20 A"/>
    <property type="chains" value="G=1-76"/>
</dbReference>
<dbReference type="PDB" id="6Y53">
    <property type="method" value="EM"/>
    <property type="resolution" value="7.10 A"/>
    <property type="chains" value="k=1-76"/>
</dbReference>
<dbReference type="PDB" id="6Y5Q">
    <property type="method" value="EM"/>
    <property type="resolution" value="7.10 A"/>
    <property type="chains" value="k=1-76"/>
</dbReference>
<dbReference type="PDB" id="7A5P">
    <property type="method" value="EM"/>
    <property type="resolution" value="5.00 A"/>
    <property type="chains" value="g/k=1-76"/>
</dbReference>
<dbReference type="PDB" id="7ABG">
    <property type="method" value="EM"/>
    <property type="resolution" value="7.80 A"/>
    <property type="chains" value="d/k=1-76"/>
</dbReference>
<dbReference type="PDB" id="7ABI">
    <property type="method" value="EM"/>
    <property type="resolution" value="8.00 A"/>
    <property type="chains" value="d/k=1-76"/>
</dbReference>
<dbReference type="PDB" id="7B0Y">
    <property type="method" value="EM"/>
    <property type="resolution" value="3.60 A"/>
    <property type="chains" value="h=1-76"/>
</dbReference>
<dbReference type="PDB" id="7DVQ">
    <property type="method" value="EM"/>
    <property type="resolution" value="2.89 A"/>
    <property type="chains" value="g/n=1-76"/>
</dbReference>
<dbReference type="PDB" id="7EVO">
    <property type="method" value="EM"/>
    <property type="resolution" value="2.50 A"/>
    <property type="chains" value="d=1-76"/>
</dbReference>
<dbReference type="PDB" id="7QTT">
    <property type="method" value="EM"/>
    <property type="resolution" value="3.10 A"/>
    <property type="chains" value="m=1-76"/>
</dbReference>
<dbReference type="PDB" id="7VPX">
    <property type="method" value="EM"/>
    <property type="resolution" value="3.00 A"/>
    <property type="chains" value="d/n=1-76"/>
</dbReference>
<dbReference type="PDB" id="7W59">
    <property type="method" value="EM"/>
    <property type="resolution" value="3.60 A"/>
    <property type="chains" value="g/n=1-76"/>
</dbReference>
<dbReference type="PDB" id="7W5A">
    <property type="method" value="EM"/>
    <property type="resolution" value="3.60 A"/>
    <property type="chains" value="g/n=1-76"/>
</dbReference>
<dbReference type="PDB" id="7W5B">
    <property type="method" value="EM"/>
    <property type="resolution" value="4.30 A"/>
    <property type="chains" value="g/n=1-76"/>
</dbReference>
<dbReference type="PDB" id="8C6J">
    <property type="method" value="EM"/>
    <property type="resolution" value="2.80 A"/>
    <property type="chains" value="g/r=1-76"/>
</dbReference>
<dbReference type="PDB" id="8CH6">
    <property type="method" value="EM"/>
    <property type="resolution" value="5.90 A"/>
    <property type="chains" value="9/m=1-76"/>
</dbReference>
<dbReference type="PDB" id="8H6E">
    <property type="method" value="EM"/>
    <property type="resolution" value="3.20 A"/>
    <property type="chains" value="2f/4f/5f=1-76"/>
</dbReference>
<dbReference type="PDB" id="8H6J">
    <property type="method" value="EM"/>
    <property type="resolution" value="3.25 A"/>
    <property type="chains" value="2f/4f/5f=1-76"/>
</dbReference>
<dbReference type="PDB" id="8H6K">
    <property type="method" value="EM"/>
    <property type="resolution" value="2.70 A"/>
    <property type="chains" value="2f/4f/5f=1-76"/>
</dbReference>
<dbReference type="PDB" id="8H6L">
    <property type="method" value="EM"/>
    <property type="resolution" value="2.60 A"/>
    <property type="chains" value="2f/4f/5f=1-76"/>
</dbReference>
<dbReference type="PDB" id="8HK1">
    <property type="method" value="EM"/>
    <property type="resolution" value="2.70 A"/>
    <property type="chains" value="d=1-76"/>
</dbReference>
<dbReference type="PDB" id="8I0P">
    <property type="method" value="EM"/>
    <property type="resolution" value="3.40 A"/>
    <property type="chains" value="f/k=1-76"/>
</dbReference>
<dbReference type="PDB" id="8I0R">
    <property type="method" value="EM"/>
    <property type="resolution" value="3.00 A"/>
    <property type="chains" value="f/k=1-76"/>
</dbReference>
<dbReference type="PDB" id="8I0S">
    <property type="method" value="EM"/>
    <property type="resolution" value="4.20 A"/>
    <property type="chains" value="f/k=1-76"/>
</dbReference>
<dbReference type="PDB" id="8I0T">
    <property type="method" value="EM"/>
    <property type="resolution" value="3.00 A"/>
    <property type="chains" value="f/k=1-76"/>
</dbReference>
<dbReference type="PDB" id="8I0U">
    <property type="method" value="EM"/>
    <property type="resolution" value="3.30 A"/>
    <property type="chains" value="f/k=1-76"/>
</dbReference>
<dbReference type="PDB" id="8I0V">
    <property type="method" value="EM"/>
    <property type="resolution" value="3.00 A"/>
    <property type="chains" value="f/k=1-76"/>
</dbReference>
<dbReference type="PDB" id="8I0W">
    <property type="method" value="EM"/>
    <property type="resolution" value="3.40 A"/>
    <property type="chains" value="f/n=1-76"/>
</dbReference>
<dbReference type="PDB" id="8Q7Q">
    <property type="method" value="EM"/>
    <property type="resolution" value="3.20 A"/>
    <property type="chains" value="g=1-76"/>
</dbReference>
<dbReference type="PDB" id="8Q7V">
    <property type="method" value="EM"/>
    <property type="resolution" value="3.80 A"/>
    <property type="chains" value="g=1-76"/>
</dbReference>
<dbReference type="PDB" id="8Q7W">
    <property type="method" value="EM"/>
    <property type="resolution" value="3.90 A"/>
    <property type="chains" value="g=1-76"/>
</dbReference>
<dbReference type="PDB" id="8Q7X">
    <property type="method" value="EM"/>
    <property type="resolution" value="4.60 A"/>
    <property type="chains" value="g=1-76"/>
</dbReference>
<dbReference type="PDB" id="8Q91">
    <property type="method" value="EM"/>
    <property type="resolution" value="3.10 A"/>
    <property type="chains" value="n=1-76"/>
</dbReference>
<dbReference type="PDB" id="8QO9">
    <property type="method" value="EM"/>
    <property type="resolution" value="5.29 A"/>
    <property type="chains" value="2g/4g/5g=1-76"/>
</dbReference>
<dbReference type="PDB" id="8QZS">
    <property type="method" value="EM"/>
    <property type="resolution" value="4.10 A"/>
    <property type="chains" value="2g/4g/5g=1-76"/>
</dbReference>
<dbReference type="PDB" id="8R08">
    <property type="method" value="EM"/>
    <property type="resolution" value="6.10 A"/>
    <property type="chains" value="1g/2g/4g/5g=1-76"/>
</dbReference>
<dbReference type="PDB" id="8R09">
    <property type="method" value="EM"/>
    <property type="resolution" value="4.30 A"/>
    <property type="chains" value="2g/4g/5g=1-76"/>
</dbReference>
<dbReference type="PDB" id="8R0A">
    <property type="method" value="EM"/>
    <property type="resolution" value="5.80 A"/>
    <property type="chains" value="2g/4g/5g=1-76"/>
</dbReference>
<dbReference type="PDB" id="8R0B">
    <property type="method" value="EM"/>
    <property type="resolution" value="4.40 A"/>
    <property type="chains" value="2g/4g/5g=1-76"/>
</dbReference>
<dbReference type="PDB" id="8R7N">
    <property type="method" value="EM"/>
    <property type="resolution" value="3.40 A"/>
    <property type="chains" value="n=1-76"/>
</dbReference>
<dbReference type="PDB" id="8RC0">
    <property type="method" value="EM"/>
    <property type="resolution" value="3.20 A"/>
    <property type="chains" value="n=1-76"/>
</dbReference>
<dbReference type="PDB" id="8RM5">
    <property type="method" value="EM"/>
    <property type="resolution" value="6.90 A"/>
    <property type="chains" value="2g/4g/5g=1-76"/>
</dbReference>
<dbReference type="PDB" id="8RO2">
    <property type="method" value="EM"/>
    <property type="resolution" value="3.50 A"/>
    <property type="chains" value="g=1-76"/>
</dbReference>
<dbReference type="PDB" id="8Y6O">
    <property type="method" value="EM"/>
    <property type="resolution" value="3.38 A"/>
    <property type="chains" value="g/n/u=1-76"/>
</dbReference>
<dbReference type="PDB" id="8Y7E">
    <property type="method" value="EM"/>
    <property type="resolution" value="4.66 A"/>
    <property type="chains" value="n=1-76"/>
</dbReference>
<dbReference type="PDB" id="9FMD">
    <property type="method" value="EM"/>
    <property type="resolution" value="3.30 A"/>
    <property type="chains" value="g/n=1-76"/>
</dbReference>
<dbReference type="PDB" id="9GBW">
    <property type="method" value="EM"/>
    <property type="resolution" value="3.50 A"/>
    <property type="chains" value="n=1-76"/>
</dbReference>
<dbReference type="PDB" id="9GC0">
    <property type="method" value="EM"/>
    <property type="resolution" value="3.20 A"/>
    <property type="chains" value="n=1-76"/>
</dbReference>
<dbReference type="PDB" id="9GCL">
    <property type="method" value="EM"/>
    <property type="resolution" value="3.00 A"/>
    <property type="chains" value="n=1-76"/>
</dbReference>
<dbReference type="PDBsum" id="3CW1"/>
<dbReference type="PDBsum" id="3JCR"/>
<dbReference type="PDBsum" id="3PGW"/>
<dbReference type="PDBsum" id="4F7U"/>
<dbReference type="PDBsum" id="4PJO"/>
<dbReference type="PDBsum" id="4V98"/>
<dbReference type="PDBsum" id="4WZJ"/>
<dbReference type="PDBsum" id="5MQF"/>
<dbReference type="PDBsum" id="5O9Z"/>
<dbReference type="PDBsum" id="5XJC"/>
<dbReference type="PDBsum" id="5XJL"/>
<dbReference type="PDBsum" id="5XJQ"/>
<dbReference type="PDBsum" id="5XJR"/>
<dbReference type="PDBsum" id="5XJT"/>
<dbReference type="PDBsum" id="5XJU"/>
<dbReference type="PDBsum" id="5YZG"/>
<dbReference type="PDBsum" id="5Z56"/>
<dbReference type="PDBsum" id="5Z57"/>
<dbReference type="PDBsum" id="5Z58"/>
<dbReference type="PDBsum" id="6AH0"/>
<dbReference type="PDBsum" id="6AHD"/>
<dbReference type="PDBsum" id="6FF7"/>
<dbReference type="PDBsum" id="6ICZ"/>
<dbReference type="PDBsum" id="6ID0"/>
<dbReference type="PDBsum" id="6ID1"/>
<dbReference type="PDBsum" id="6QDV"/>
<dbReference type="PDBsum" id="6QW6"/>
<dbReference type="PDBsum" id="6QX9"/>
<dbReference type="PDBsum" id="6V4X"/>
<dbReference type="PDBsum" id="6Y53"/>
<dbReference type="PDBsum" id="6Y5Q"/>
<dbReference type="PDBsum" id="7A5P"/>
<dbReference type="PDBsum" id="7ABG"/>
<dbReference type="PDBsum" id="7ABI"/>
<dbReference type="PDBsum" id="7B0Y"/>
<dbReference type="PDBsum" id="7DVQ"/>
<dbReference type="PDBsum" id="7EVO"/>
<dbReference type="PDBsum" id="7QTT"/>
<dbReference type="PDBsum" id="7VPX"/>
<dbReference type="PDBsum" id="7W59"/>
<dbReference type="PDBsum" id="7W5A"/>
<dbReference type="PDBsum" id="7W5B"/>
<dbReference type="PDBsum" id="8C6J"/>
<dbReference type="PDBsum" id="8CH6"/>
<dbReference type="PDBsum" id="8H6E"/>
<dbReference type="PDBsum" id="8H6J"/>
<dbReference type="PDBsum" id="8H6K"/>
<dbReference type="PDBsum" id="8H6L"/>
<dbReference type="PDBsum" id="8HK1"/>
<dbReference type="PDBsum" id="8I0P"/>
<dbReference type="PDBsum" id="8I0R"/>
<dbReference type="PDBsum" id="8I0S"/>
<dbReference type="PDBsum" id="8I0T"/>
<dbReference type="PDBsum" id="8I0U"/>
<dbReference type="PDBsum" id="8I0V"/>
<dbReference type="PDBsum" id="8I0W"/>
<dbReference type="PDBsum" id="8Q7Q"/>
<dbReference type="PDBsum" id="8Q7V"/>
<dbReference type="PDBsum" id="8Q7W"/>
<dbReference type="PDBsum" id="8Q7X"/>
<dbReference type="PDBsum" id="8Q91"/>
<dbReference type="PDBsum" id="8QO9"/>
<dbReference type="PDBsum" id="8QZS"/>
<dbReference type="PDBsum" id="8R08"/>
<dbReference type="PDBsum" id="8R09"/>
<dbReference type="PDBsum" id="8R0A"/>
<dbReference type="PDBsum" id="8R0B"/>
<dbReference type="PDBsum" id="8R7N"/>
<dbReference type="PDBsum" id="8RC0"/>
<dbReference type="PDBsum" id="8RM5"/>
<dbReference type="PDBsum" id="8RO2"/>
<dbReference type="PDBsum" id="8Y6O"/>
<dbReference type="PDBsum" id="8Y7E"/>
<dbReference type="PDBsum" id="9FMD"/>
<dbReference type="PDBsum" id="9GBW"/>
<dbReference type="PDBsum" id="9GC0"/>
<dbReference type="PDBsum" id="9GCL"/>
<dbReference type="EMDB" id="EMD-10689"/>
<dbReference type="EMDB" id="EMD-11695"/>
<dbReference type="EMDB" id="EMD-11697"/>
<dbReference type="EMDB" id="EMD-11972"/>
<dbReference type="EMDB" id="EMD-14146"/>
<dbReference type="EMDB" id="EMD-16452"/>
<dbReference type="EMDB" id="EMD-16658"/>
<dbReference type="EMDB" id="EMD-18229"/>
<dbReference type="EMDB" id="EMD-18234"/>
<dbReference type="EMDB" id="EMD-18235"/>
<dbReference type="EMDB" id="EMD-18237"/>
<dbReference type="EMDB" id="EMD-18267"/>
<dbReference type="EMDB" id="EMD-18529"/>
<dbReference type="EMDB" id="EMD-18718"/>
<dbReference type="EMDB" id="EMD-18781"/>
<dbReference type="EMDB" id="EMD-18786"/>
<dbReference type="EMDB" id="EMD-18787"/>
<dbReference type="EMDB" id="EMD-18788"/>
<dbReference type="EMDB" id="EMD-18789"/>
<dbReference type="EMDB" id="EMD-18984"/>
<dbReference type="EMDB" id="EMD-19041"/>
<dbReference type="EMDB" id="EMD-19349"/>
<dbReference type="EMDB" id="EMD-19399"/>
<dbReference type="EMDB" id="EMD-21050"/>
<dbReference type="EMDB" id="EMD-30875"/>
<dbReference type="EMDB" id="EMD-31334"/>
<dbReference type="EMDB" id="EMD-32074"/>
<dbReference type="EMDB" id="EMD-32317"/>
<dbReference type="EMDB" id="EMD-32319"/>
<dbReference type="EMDB" id="EMD-32321"/>
<dbReference type="EMDB" id="EMD-34500"/>
<dbReference type="EMDB" id="EMD-34505"/>
<dbReference type="EMDB" id="EMD-34507"/>
<dbReference type="EMDB" id="EMD-34508"/>
<dbReference type="EMDB" id="EMD-34841"/>
<dbReference type="EMDB" id="EMD-35105"/>
<dbReference type="EMDB" id="EMD-35107"/>
<dbReference type="EMDB" id="EMD-35108"/>
<dbReference type="EMDB" id="EMD-35109"/>
<dbReference type="EMDB" id="EMD-35110"/>
<dbReference type="EMDB" id="EMD-35111"/>
<dbReference type="EMDB" id="EMD-35113"/>
<dbReference type="EMDB" id="EMD-3545"/>
<dbReference type="EMDB" id="EMD-3766"/>
<dbReference type="EMDB" id="EMD-38993"/>
<dbReference type="EMDB" id="EMD-39013"/>
<dbReference type="EMDB" id="EMD-4525"/>
<dbReference type="EMDB" id="EMD-4658"/>
<dbReference type="EMDB" id="EMD-4665"/>
<dbReference type="EMDB" id="EMD-51223"/>
<dbReference type="EMDB" id="EMD-51226"/>
<dbReference type="EMDB" id="EMD-51233"/>
<dbReference type="EMDB" id="EMD-6721"/>
<dbReference type="EMDB" id="EMD-6864"/>
<dbReference type="EMDB" id="EMD-6889"/>
<dbReference type="EMDB" id="EMD-6890"/>
<dbReference type="EMDB" id="EMD-6891"/>
<dbReference type="EMDB" id="EMD-9621"/>
<dbReference type="EMDB" id="EMD-9624"/>
<dbReference type="EMDB" id="EMD-9645"/>
<dbReference type="EMDB" id="EMD-9646"/>
<dbReference type="EMDB" id="EMD-9647"/>
<dbReference type="SMR" id="P62308"/>
<dbReference type="BioGRID" id="112521">
    <property type="interactions" value="201"/>
</dbReference>
<dbReference type="ComplexPortal" id="CPX-2391">
    <property type="entry name" value="U4/U6.U5 small nuclear ribonucleoprotein complex"/>
</dbReference>
<dbReference type="ComplexPortal" id="CPX-2392">
    <property type="entry name" value="U1 small nuclear ribonucleoprotein complex"/>
</dbReference>
<dbReference type="ComplexPortal" id="CPX-2539">
    <property type="entry name" value="U2 small nuclear ribonucleoprotein complex"/>
</dbReference>
<dbReference type="ComplexPortal" id="CPX-2705">
    <property type="entry name" value="U7 small nuclear ribonucleoprotein complex"/>
</dbReference>
<dbReference type="ComplexPortal" id="CPX-6033">
    <property type="entry name" value="Sm complex"/>
</dbReference>
<dbReference type="CORUM" id="P62308"/>
<dbReference type="DIP" id="DIP-34627N"/>
<dbReference type="FunCoup" id="P62308">
    <property type="interactions" value="2230"/>
</dbReference>
<dbReference type="IntAct" id="P62308">
    <property type="interactions" value="134"/>
</dbReference>
<dbReference type="MINT" id="P62308"/>
<dbReference type="STRING" id="9606.ENSP00000393388"/>
<dbReference type="GlyGen" id="P62308">
    <property type="glycosylation" value="1 site, 1 O-linked glycan (1 site)"/>
</dbReference>
<dbReference type="iPTMnet" id="P62308"/>
<dbReference type="PhosphoSitePlus" id="P62308"/>
<dbReference type="SwissPalm" id="P62308"/>
<dbReference type="BioMuta" id="SNRPG"/>
<dbReference type="DMDM" id="59800216"/>
<dbReference type="jPOST" id="P62308"/>
<dbReference type="MassIVE" id="P62308"/>
<dbReference type="PaxDb" id="9606-ENSP00000272348"/>
<dbReference type="PeptideAtlas" id="P62308"/>
<dbReference type="ProteomicsDB" id="57388"/>
<dbReference type="Pumba" id="P62308"/>
<dbReference type="TopDownProteomics" id="P62308"/>
<dbReference type="Antibodypedia" id="31102">
    <property type="antibodies" value="143 antibodies from 19 providers"/>
</dbReference>
<dbReference type="DNASU" id="6637"/>
<dbReference type="Ensembl" id="ENST00000272348.7">
    <property type="protein sequence ID" value="ENSP00000272348.2"/>
    <property type="gene ID" value="ENSG00000143977.14"/>
</dbReference>
<dbReference type="GeneID" id="6637"/>
<dbReference type="KEGG" id="hsa:6637"/>
<dbReference type="MANE-Select" id="ENST00000272348.7">
    <property type="protein sequence ID" value="ENSP00000272348.2"/>
    <property type="RefSeq nucleotide sequence ID" value="NM_003096.4"/>
    <property type="RefSeq protein sequence ID" value="NP_003087.1"/>
</dbReference>
<dbReference type="UCSC" id="uc002sgp.4">
    <property type="organism name" value="human"/>
</dbReference>
<dbReference type="AGR" id="HGNC:11163"/>
<dbReference type="CTD" id="6637"/>
<dbReference type="DisGeNET" id="6637"/>
<dbReference type="GeneCards" id="SNRPG"/>
<dbReference type="HGNC" id="HGNC:11163">
    <property type="gene designation" value="SNRPG"/>
</dbReference>
<dbReference type="HPA" id="ENSG00000143977">
    <property type="expression patterns" value="Low tissue specificity"/>
</dbReference>
<dbReference type="MIM" id="603542">
    <property type="type" value="gene"/>
</dbReference>
<dbReference type="neXtProt" id="NX_P62308"/>
<dbReference type="OpenTargets" id="ENSG00000143977"/>
<dbReference type="PharmGKB" id="PA36004"/>
<dbReference type="VEuPathDB" id="HostDB:ENSG00000143977"/>
<dbReference type="eggNOG" id="KOG1780">
    <property type="taxonomic scope" value="Eukaryota"/>
</dbReference>
<dbReference type="GeneTree" id="ENSGT00510000046985"/>
<dbReference type="HOGENOM" id="CLU_076902_10_1_1"/>
<dbReference type="InParanoid" id="P62308"/>
<dbReference type="OMA" id="MSKAQPP"/>
<dbReference type="OrthoDB" id="9817934at2759"/>
<dbReference type="PAN-GO" id="P62308">
    <property type="GO annotations" value="13 GO annotations based on evolutionary models"/>
</dbReference>
<dbReference type="TreeFam" id="TF315099"/>
<dbReference type="PathwayCommons" id="P62308"/>
<dbReference type="Reactome" id="R-HSA-111367">
    <property type="pathway name" value="SLBP independent Processing of Histone Pre-mRNAs"/>
</dbReference>
<dbReference type="Reactome" id="R-HSA-191859">
    <property type="pathway name" value="snRNP Assembly"/>
</dbReference>
<dbReference type="Reactome" id="R-HSA-72163">
    <property type="pathway name" value="mRNA Splicing - Major Pathway"/>
</dbReference>
<dbReference type="Reactome" id="R-HSA-72165">
    <property type="pathway name" value="mRNA Splicing - Minor Pathway"/>
</dbReference>
<dbReference type="Reactome" id="R-HSA-73856">
    <property type="pathway name" value="RNA Polymerase II Transcription Termination"/>
</dbReference>
<dbReference type="Reactome" id="R-HSA-77588">
    <property type="pathway name" value="SLBP Dependent Processing of Replication-Dependent Histone Pre-mRNAs"/>
</dbReference>
<dbReference type="Reactome" id="R-HSA-9754678">
    <property type="pathway name" value="SARS-CoV-2 modulates host translation machinery"/>
</dbReference>
<dbReference type="SignaLink" id="P62308"/>
<dbReference type="SIGNOR" id="P62308"/>
<dbReference type="BioGRID-ORCS" id="6637">
    <property type="hits" value="758 hits in 1071 CRISPR screens"/>
</dbReference>
<dbReference type="CD-CODE" id="6F24707C">
    <property type="entry name" value="Cajal body"/>
</dbReference>
<dbReference type="CD-CODE" id="91857CE7">
    <property type="entry name" value="Nucleolus"/>
</dbReference>
<dbReference type="ChiTaRS" id="SNRPG">
    <property type="organism name" value="human"/>
</dbReference>
<dbReference type="EvolutionaryTrace" id="P62308"/>
<dbReference type="GeneWiki" id="SNRPG"/>
<dbReference type="GenomeRNAi" id="6637"/>
<dbReference type="Pharos" id="P62308">
    <property type="development level" value="Tbio"/>
</dbReference>
<dbReference type="PRO" id="PR:P62308"/>
<dbReference type="Proteomes" id="UP000005640">
    <property type="component" value="Chromosome 2"/>
</dbReference>
<dbReference type="RNAct" id="P62308">
    <property type="molecule type" value="protein"/>
</dbReference>
<dbReference type="Bgee" id="ENSG00000143977">
    <property type="expression patterns" value="Expressed in ganglionic eminence and 101 other cell types or tissues"/>
</dbReference>
<dbReference type="ExpressionAtlas" id="P62308">
    <property type="expression patterns" value="baseline and differential"/>
</dbReference>
<dbReference type="GO" id="GO:0071013">
    <property type="term" value="C:catalytic step 2 spliceosome"/>
    <property type="evidence" value="ECO:0000314"/>
    <property type="project" value="UniProtKB"/>
</dbReference>
<dbReference type="GO" id="GO:0005829">
    <property type="term" value="C:cytosol"/>
    <property type="evidence" value="ECO:0000314"/>
    <property type="project" value="UniProtKB"/>
</dbReference>
<dbReference type="GO" id="GO:0034709">
    <property type="term" value="C:methylosome"/>
    <property type="evidence" value="ECO:0000314"/>
    <property type="project" value="UniProtKB"/>
</dbReference>
<dbReference type="GO" id="GO:0005654">
    <property type="term" value="C:nucleoplasm"/>
    <property type="evidence" value="ECO:0000314"/>
    <property type="project" value="HPA"/>
</dbReference>
<dbReference type="GO" id="GO:0005634">
    <property type="term" value="C:nucleus"/>
    <property type="evidence" value="ECO:0000314"/>
    <property type="project" value="UniProtKB"/>
</dbReference>
<dbReference type="GO" id="GO:0043186">
    <property type="term" value="C:P granule"/>
    <property type="evidence" value="ECO:0000318"/>
    <property type="project" value="GO_Central"/>
</dbReference>
<dbReference type="GO" id="GO:0071011">
    <property type="term" value="C:precatalytic spliceosome"/>
    <property type="evidence" value="ECO:0000318"/>
    <property type="project" value="GO_Central"/>
</dbReference>
<dbReference type="GO" id="GO:0030532">
    <property type="term" value="C:small nuclear ribonucleoprotein complex"/>
    <property type="evidence" value="ECO:0000303"/>
    <property type="project" value="UniProtKB"/>
</dbReference>
<dbReference type="GO" id="GO:0034719">
    <property type="term" value="C:SMN-Sm protein complex"/>
    <property type="evidence" value="ECO:0000314"/>
    <property type="project" value="UniProtKB"/>
</dbReference>
<dbReference type="GO" id="GO:0005681">
    <property type="term" value="C:spliceosomal complex"/>
    <property type="evidence" value="ECO:0000353"/>
    <property type="project" value="ComplexPortal"/>
</dbReference>
<dbReference type="GO" id="GO:0097526">
    <property type="term" value="C:spliceosomal tri-snRNP complex"/>
    <property type="evidence" value="ECO:0000318"/>
    <property type="project" value="GO_Central"/>
</dbReference>
<dbReference type="GO" id="GO:0005685">
    <property type="term" value="C:U1 snRNP"/>
    <property type="evidence" value="ECO:0000314"/>
    <property type="project" value="UniProtKB"/>
</dbReference>
<dbReference type="GO" id="GO:0005689">
    <property type="term" value="C:U12-type spliceosomal complex"/>
    <property type="evidence" value="ECO:0000314"/>
    <property type="project" value="UniProtKB"/>
</dbReference>
<dbReference type="GO" id="GO:0005686">
    <property type="term" value="C:U2 snRNP"/>
    <property type="evidence" value="ECO:0000318"/>
    <property type="project" value="GO_Central"/>
</dbReference>
<dbReference type="GO" id="GO:0071007">
    <property type="term" value="C:U2-type catalytic step 2 spliceosome"/>
    <property type="evidence" value="ECO:0000314"/>
    <property type="project" value="UniProtKB"/>
</dbReference>
<dbReference type="GO" id="GO:0071005">
    <property type="term" value="C:U2-type precatalytic spliceosome"/>
    <property type="evidence" value="ECO:0000314"/>
    <property type="project" value="UniProtKB"/>
</dbReference>
<dbReference type="GO" id="GO:0071004">
    <property type="term" value="C:U2-type prespliceosome"/>
    <property type="evidence" value="ECO:0000318"/>
    <property type="project" value="GO_Central"/>
</dbReference>
<dbReference type="GO" id="GO:0005684">
    <property type="term" value="C:U2-type spliceosomal complex"/>
    <property type="evidence" value="ECO:0000314"/>
    <property type="project" value="UniProtKB"/>
</dbReference>
<dbReference type="GO" id="GO:0005687">
    <property type="term" value="C:U4 snRNP"/>
    <property type="evidence" value="ECO:0000314"/>
    <property type="project" value="UniProtKB"/>
</dbReference>
<dbReference type="GO" id="GO:0046540">
    <property type="term" value="C:U4/U6 x U5 tri-snRNP complex"/>
    <property type="evidence" value="ECO:0000314"/>
    <property type="project" value="UniProtKB"/>
</dbReference>
<dbReference type="GO" id="GO:0005682">
    <property type="term" value="C:U5 snRNP"/>
    <property type="evidence" value="ECO:0000318"/>
    <property type="project" value="GO_Central"/>
</dbReference>
<dbReference type="GO" id="GO:0005683">
    <property type="term" value="C:U7 snRNP"/>
    <property type="evidence" value="ECO:0000314"/>
    <property type="project" value="UniProtKB"/>
</dbReference>
<dbReference type="GO" id="GO:0003723">
    <property type="term" value="F:RNA binding"/>
    <property type="evidence" value="ECO:0007005"/>
    <property type="project" value="UniProtKB"/>
</dbReference>
<dbReference type="GO" id="GO:0036261">
    <property type="term" value="P:7-methylguanosine cap hypermethylation"/>
    <property type="evidence" value="ECO:0000303"/>
    <property type="project" value="ComplexPortal"/>
</dbReference>
<dbReference type="GO" id="GO:0000398">
    <property type="term" value="P:mRNA splicing, via spliceosome"/>
    <property type="evidence" value="ECO:0000314"/>
    <property type="project" value="UniProtKB"/>
</dbReference>
<dbReference type="GO" id="GO:0008380">
    <property type="term" value="P:RNA splicing"/>
    <property type="evidence" value="ECO:0000304"/>
    <property type="project" value="UniProtKB"/>
</dbReference>
<dbReference type="GO" id="GO:0000245">
    <property type="term" value="P:spliceosomal complex assembly"/>
    <property type="evidence" value="ECO:0000303"/>
    <property type="project" value="UniProtKB"/>
</dbReference>
<dbReference type="GO" id="GO:0000387">
    <property type="term" value="P:spliceosomal snRNP assembly"/>
    <property type="evidence" value="ECO:0000314"/>
    <property type="project" value="UniProtKB"/>
</dbReference>
<dbReference type="GO" id="GO:1903241">
    <property type="term" value="P:U2-type prespliceosome assembly"/>
    <property type="evidence" value="ECO:0000303"/>
    <property type="project" value="ComplexPortal"/>
</dbReference>
<dbReference type="CDD" id="cd01719">
    <property type="entry name" value="Sm_G"/>
    <property type="match status" value="1"/>
</dbReference>
<dbReference type="FunFam" id="2.30.30.100:FF:000017">
    <property type="entry name" value="Small nuclear ribonucleoprotein G"/>
    <property type="match status" value="1"/>
</dbReference>
<dbReference type="Gene3D" id="2.30.30.100">
    <property type="match status" value="1"/>
</dbReference>
<dbReference type="IDEAL" id="IID00158"/>
<dbReference type="InterPro" id="IPR044641">
    <property type="entry name" value="Lsm7/SmG-like"/>
</dbReference>
<dbReference type="InterPro" id="IPR010920">
    <property type="entry name" value="LSM_dom_sf"/>
</dbReference>
<dbReference type="InterPro" id="IPR047575">
    <property type="entry name" value="Sm"/>
</dbReference>
<dbReference type="InterPro" id="IPR001163">
    <property type="entry name" value="Sm_dom_euk/arc"/>
</dbReference>
<dbReference type="InterPro" id="IPR034098">
    <property type="entry name" value="Sm_G"/>
</dbReference>
<dbReference type="PANTHER" id="PTHR10553">
    <property type="entry name" value="SMALL NUCLEAR RIBONUCLEOPROTEIN"/>
    <property type="match status" value="1"/>
</dbReference>
<dbReference type="PANTHER" id="PTHR10553:SF26">
    <property type="entry name" value="SMALL NUCLEAR RIBONUCLEOPROTEIN G-RELATED"/>
    <property type="match status" value="1"/>
</dbReference>
<dbReference type="Pfam" id="PF01423">
    <property type="entry name" value="LSM"/>
    <property type="match status" value="1"/>
</dbReference>
<dbReference type="PIRSF" id="PIRSF037188">
    <property type="entry name" value="U6_snRNA_Lsm7"/>
    <property type="match status" value="1"/>
</dbReference>
<dbReference type="SMART" id="SM00651">
    <property type="entry name" value="Sm"/>
    <property type="match status" value="1"/>
</dbReference>
<dbReference type="SUPFAM" id="SSF50182">
    <property type="entry name" value="Sm-like ribonucleoproteins"/>
    <property type="match status" value="1"/>
</dbReference>
<dbReference type="PROSITE" id="PS52002">
    <property type="entry name" value="SM"/>
    <property type="match status" value="1"/>
</dbReference>
<gene>
    <name type="primary">SNRPG</name>
    <name type="synonym">PBSCG</name>
</gene>
<reference key="1">
    <citation type="journal article" date="1995" name="EMBO J.">
        <title>snRNP Sm proteins share two evolutionarily conserved sequence motifs which are involved in Sm protein-protein interactions.</title>
        <authorList>
            <person name="Hermann H."/>
            <person name="Fabrizio P."/>
            <person name="Raker V.A."/>
            <person name="Foulaki K."/>
            <person name="Hornig H."/>
            <person name="Brahms H."/>
            <person name="Luehrmann R."/>
        </authorList>
    </citation>
    <scope>NUCLEOTIDE SEQUENCE [MRNA]</scope>
</reference>
<reference key="2">
    <citation type="submission" date="2004-06" db="EMBL/GenBank/DDBJ databases">
        <title>Cloning of human full open reading frames in Gateway(TM) system entry vector (pDONR201).</title>
        <authorList>
            <person name="Ebert L."/>
            <person name="Schick M."/>
            <person name="Neubert P."/>
            <person name="Schatten R."/>
            <person name="Henze S."/>
            <person name="Korn B."/>
        </authorList>
    </citation>
    <scope>NUCLEOTIDE SEQUENCE [LARGE SCALE MRNA]</scope>
</reference>
<reference key="3">
    <citation type="journal article" date="2005" name="Nature">
        <title>Generation and annotation of the DNA sequences of human chromosomes 2 and 4.</title>
        <authorList>
            <person name="Hillier L.W."/>
            <person name="Graves T.A."/>
            <person name="Fulton R.S."/>
            <person name="Fulton L.A."/>
            <person name="Pepin K.H."/>
            <person name="Minx P."/>
            <person name="Wagner-McPherson C."/>
            <person name="Layman D."/>
            <person name="Wylie K."/>
            <person name="Sekhon M."/>
            <person name="Becker M.C."/>
            <person name="Fewell G.A."/>
            <person name="Delehaunty K.D."/>
            <person name="Miner T.L."/>
            <person name="Nash W.E."/>
            <person name="Kremitzki C."/>
            <person name="Oddy L."/>
            <person name="Du H."/>
            <person name="Sun H."/>
            <person name="Bradshaw-Cordum H."/>
            <person name="Ali J."/>
            <person name="Carter J."/>
            <person name="Cordes M."/>
            <person name="Harris A."/>
            <person name="Isak A."/>
            <person name="van Brunt A."/>
            <person name="Nguyen C."/>
            <person name="Du F."/>
            <person name="Courtney L."/>
            <person name="Kalicki J."/>
            <person name="Ozersky P."/>
            <person name="Abbott S."/>
            <person name="Armstrong J."/>
            <person name="Belter E.A."/>
            <person name="Caruso L."/>
            <person name="Cedroni M."/>
            <person name="Cotton M."/>
            <person name="Davidson T."/>
            <person name="Desai A."/>
            <person name="Elliott G."/>
            <person name="Erb T."/>
            <person name="Fronick C."/>
            <person name="Gaige T."/>
            <person name="Haakenson W."/>
            <person name="Haglund K."/>
            <person name="Holmes A."/>
            <person name="Harkins R."/>
            <person name="Kim K."/>
            <person name="Kruchowski S.S."/>
            <person name="Strong C.M."/>
            <person name="Grewal N."/>
            <person name="Goyea E."/>
            <person name="Hou S."/>
            <person name="Levy A."/>
            <person name="Martinka S."/>
            <person name="Mead K."/>
            <person name="McLellan M.D."/>
            <person name="Meyer R."/>
            <person name="Randall-Maher J."/>
            <person name="Tomlinson C."/>
            <person name="Dauphin-Kohlberg S."/>
            <person name="Kozlowicz-Reilly A."/>
            <person name="Shah N."/>
            <person name="Swearengen-Shahid S."/>
            <person name="Snider J."/>
            <person name="Strong J.T."/>
            <person name="Thompson J."/>
            <person name="Yoakum M."/>
            <person name="Leonard S."/>
            <person name="Pearman C."/>
            <person name="Trani L."/>
            <person name="Radionenko M."/>
            <person name="Waligorski J.E."/>
            <person name="Wang C."/>
            <person name="Rock S.M."/>
            <person name="Tin-Wollam A.-M."/>
            <person name="Maupin R."/>
            <person name="Latreille P."/>
            <person name="Wendl M.C."/>
            <person name="Yang S.-P."/>
            <person name="Pohl C."/>
            <person name="Wallis J.W."/>
            <person name="Spieth J."/>
            <person name="Bieri T.A."/>
            <person name="Berkowicz N."/>
            <person name="Nelson J.O."/>
            <person name="Osborne J."/>
            <person name="Ding L."/>
            <person name="Meyer R."/>
            <person name="Sabo A."/>
            <person name="Shotland Y."/>
            <person name="Sinha P."/>
            <person name="Wohldmann P.E."/>
            <person name="Cook L.L."/>
            <person name="Hickenbotham M.T."/>
            <person name="Eldred J."/>
            <person name="Williams D."/>
            <person name="Jones T.A."/>
            <person name="She X."/>
            <person name="Ciccarelli F.D."/>
            <person name="Izaurralde E."/>
            <person name="Taylor J."/>
            <person name="Schmutz J."/>
            <person name="Myers R.M."/>
            <person name="Cox D.R."/>
            <person name="Huang X."/>
            <person name="McPherson J.D."/>
            <person name="Mardis E.R."/>
            <person name="Clifton S.W."/>
            <person name="Warren W.C."/>
            <person name="Chinwalla A.T."/>
            <person name="Eddy S.R."/>
            <person name="Marra M.A."/>
            <person name="Ovcharenko I."/>
            <person name="Furey T.S."/>
            <person name="Miller W."/>
            <person name="Eichler E.E."/>
            <person name="Bork P."/>
            <person name="Suyama M."/>
            <person name="Torrents D."/>
            <person name="Waterston R.H."/>
            <person name="Wilson R.K."/>
        </authorList>
    </citation>
    <scope>NUCLEOTIDE SEQUENCE [LARGE SCALE GENOMIC DNA]</scope>
</reference>
<reference key="4">
    <citation type="submission" date="2005-09" db="EMBL/GenBank/DDBJ databases">
        <authorList>
            <person name="Mural R.J."/>
            <person name="Istrail S."/>
            <person name="Sutton G.G."/>
            <person name="Florea L."/>
            <person name="Halpern A.L."/>
            <person name="Mobarry C.M."/>
            <person name="Lippert R."/>
            <person name="Walenz B."/>
            <person name="Shatkay H."/>
            <person name="Dew I."/>
            <person name="Miller J.R."/>
            <person name="Flanigan M.J."/>
            <person name="Edwards N.J."/>
            <person name="Bolanos R."/>
            <person name="Fasulo D."/>
            <person name="Halldorsson B.V."/>
            <person name="Hannenhalli S."/>
            <person name="Turner R."/>
            <person name="Yooseph S."/>
            <person name="Lu F."/>
            <person name="Nusskern D.R."/>
            <person name="Shue B.C."/>
            <person name="Zheng X.H."/>
            <person name="Zhong F."/>
            <person name="Delcher A.L."/>
            <person name="Huson D.H."/>
            <person name="Kravitz S.A."/>
            <person name="Mouchard L."/>
            <person name="Reinert K."/>
            <person name="Remington K.A."/>
            <person name="Clark A.G."/>
            <person name="Waterman M.S."/>
            <person name="Eichler E.E."/>
            <person name="Adams M.D."/>
            <person name="Hunkapiller M.W."/>
            <person name="Myers E.W."/>
            <person name="Venter J.C."/>
        </authorList>
    </citation>
    <scope>NUCLEOTIDE SEQUENCE [LARGE SCALE GENOMIC DNA]</scope>
</reference>
<reference key="5">
    <citation type="journal article" date="2004" name="Genome Res.">
        <title>The status, quality, and expansion of the NIH full-length cDNA project: the Mammalian Gene Collection (MGC).</title>
        <authorList>
            <consortium name="The MGC Project Team"/>
        </authorList>
    </citation>
    <scope>NUCLEOTIDE SEQUENCE [LARGE SCALE MRNA]</scope>
    <source>
        <tissue>Bone</tissue>
        <tissue>Brain</tissue>
        <tissue>Pancreas</tissue>
        <tissue>Placenta</tissue>
    </source>
</reference>
<reference key="6">
    <citation type="journal article" date="2001" name="EMBO J.">
        <title>Purified U7 snRNPs lack the Sm proteins D1 and D2 but contain Lsm10, a new 14 kDa Sm D1-like protein.</title>
        <authorList>
            <person name="Pillai R.S."/>
            <person name="Will C.L."/>
            <person name="Luehrmann R."/>
            <person name="Schuemperli D."/>
            <person name="Mueller B."/>
        </authorList>
    </citation>
    <scope>IDENTIFICATION IN THE U7 SNRNP COMPLEX</scope>
    <scope>SUBUNIT</scope>
    <scope>SUBCELLULAR LOCATION</scope>
    <scope>IDENTIFICATION BY MASS SPECTROMETRY</scope>
</reference>
<reference key="7">
    <citation type="journal article" date="2002" name="Oncogene">
        <title>Carcinogenesis and translational controls: TACC1 is down-regulated in human cancers and associates with mRNA regulators.</title>
        <authorList>
            <person name="Conte N."/>
            <person name="Charafe-Jauffret E."/>
            <person name="Delaval B."/>
            <person name="Adelaide J."/>
            <person name="Ginestier C."/>
            <person name="Geneix J."/>
            <person name="Isnardon D."/>
            <person name="Jacquemier J."/>
            <person name="Birnbaum D."/>
        </authorList>
    </citation>
    <scope>INTERACTION WITH TACC1</scope>
</reference>
<reference key="8">
    <citation type="journal article" date="2002" name="RNA">
        <title>Purification and characterization of native spliceosomes suitable for three-dimensional structural analysis.</title>
        <authorList>
            <person name="Jurica M.S."/>
            <person name="Licklider L.J."/>
            <person name="Gygi S.P."/>
            <person name="Grigorieff N."/>
            <person name="Moore M.J."/>
        </authorList>
    </citation>
    <scope>IDENTIFICATION BY MASS SPECTROMETRY</scope>
    <scope>IDENTIFICATION IN THE SPLICEOSOMAL C COMPLEX</scope>
    <scope>FUNCTION</scope>
    <scope>SUBCELLULAR LOCATION</scope>
    <scope>SUBUNIT</scope>
</reference>
<reference key="9">
    <citation type="journal article" date="2003" name="Genes Dev.">
        <title>Unique Sm core structure of U7 snRNPs: assembly by a specialized SMN complex and the role of a new component, Lsm11, in histone RNA processing.</title>
        <authorList>
            <person name="Pillai R.S."/>
            <person name="Grimmler M."/>
            <person name="Meister G."/>
            <person name="Will C.L."/>
            <person name="Luehrmann R."/>
            <person name="Fischer U."/>
            <person name="Schuemperli D."/>
        </authorList>
    </citation>
    <scope>FUNCTION OF THE U7 SNRNP COMPLEX</scope>
    <scope>SUBUNIT</scope>
</reference>
<reference key="10">
    <citation type="journal article" date="2004" name="RNA">
        <title>The human 18S U11/U12 snRNP contains a set of novel proteins not found in the U2-dependent spliceosome.</title>
        <authorList>
            <person name="Will C.L."/>
            <person name="Schneider C."/>
            <person name="Hossbach M."/>
            <person name="Urlaub H."/>
            <person name="Rauhut R."/>
            <person name="Elbashir S."/>
            <person name="Tuschl T."/>
            <person name="Luehrmann R."/>
        </authorList>
    </citation>
    <scope>IDENTIFICATION IN A COMPLEX WITH THE MINOR SPLICEOSOME</scope>
    <scope>IDENTIFICATION BY MASS SPECTROMETRY</scope>
</reference>
<reference key="11">
    <citation type="journal article" date="2005" name="Mol. Cell. Biol.">
        <title>Specific sequence features, recognized by the SMN complex, identify snRNAs and determine their fate as snRNPs.</title>
        <authorList>
            <person name="Golembe T.J."/>
            <person name="Yong J."/>
            <person name="Dreyfuss G."/>
        </authorList>
    </citation>
    <scope>IDENTIFICATION IN THE SMN-SM COMPLEX</scope>
</reference>
<reference key="12">
    <citation type="journal article" date="2008" name="Cell">
        <title>An assembly chaperone collaborates with the SMN complex to generate spliceosomal SnRNPs.</title>
        <authorList>
            <person name="Chari A."/>
            <person name="Golas M.M."/>
            <person name="Klingenhager M."/>
            <person name="Neuenkirchen N."/>
            <person name="Sander B."/>
            <person name="Englbrecht C."/>
            <person name="Sickmann A."/>
            <person name="Stark H."/>
            <person name="Fischer U."/>
        </authorList>
    </citation>
    <scope>FUNCTION IN SNRNP BIOGENESIS</scope>
    <scope>IDENTIFICATION IN 6S PICLN-SM COMPLEX</scope>
    <scope>IDENTIFICATION IN SMN-SM COMPLEX</scope>
    <scope>SUBCELLULAR LOCATION</scope>
</reference>
<reference key="13">
    <citation type="journal article" date="2009" name="Nature">
        <title>Crystal structure of human spliceosomal U1 snRNP at 5.5 A resolution.</title>
        <authorList>
            <person name="Pomeranz Krummel D.A."/>
            <person name="Oubridge C."/>
            <person name="Leung A.K."/>
            <person name="Li J."/>
            <person name="Nagai K."/>
        </authorList>
    </citation>
    <scope>X-RAY CRYSTALLOGRAPHY (5.49 ANGSTROMS) OF 1-174 IN SPLICEOSOMAL U1 SNRNP</scope>
    <scope>FUNCTION</scope>
    <scope>SUBUNIT</scope>
</reference>
<reference evidence="26" key="14">
    <citation type="journal article" date="2011" name="Cell">
        <title>Structure of a key intermediate of the SMN complex reveals Gemin2's crucial function in snRNP assembly.</title>
        <authorList>
            <person name="Zhang R."/>
            <person name="So B.R."/>
            <person name="Li P."/>
            <person name="Yong J."/>
            <person name="Glisovic T."/>
            <person name="Wan L."/>
            <person name="Dreyfuss G."/>
        </authorList>
    </citation>
    <scope>X-RAY CRYSTALLOGRAPHY (2.50 ANGSTROMS) IN COMPLEX WITH SNRPD1; SNRPD2; SNRPE; SNRPF; SMN1 AND GEMIN2</scope>
    <scope>INTERACTION WITH GEMIN2 AND SNRPE</scope>
</reference>
<reference key="15">
    <citation type="journal article" date="2011" name="Nature">
        <title>Structure of the spliceosomal U4 snRNP core domain and its implication for snRNP biogenesis.</title>
        <authorList>
            <person name="Leung A.K."/>
            <person name="Nagai K."/>
            <person name="Li J."/>
        </authorList>
    </citation>
    <scope>X-RAY CRYSTALLOGRAPHY (3.60 ANGSTROMS) IN SPLICEOSOMAL CORE U4 SNRNP</scope>
    <scope>SUBUNIT</scope>
</reference>
<reference key="16">
    <citation type="journal article" date="2013" name="Mol. Cell">
        <title>Structural basis of assembly chaperone-mediated snRNP formation.</title>
        <authorList>
            <person name="Grimm C."/>
            <person name="Chari A."/>
            <person name="Pelz J.P."/>
            <person name="Kuper J."/>
            <person name="Kisker C."/>
            <person name="Diederichs K."/>
            <person name="Stark H."/>
            <person name="Schindelin H."/>
            <person name="Fischer U."/>
        </authorList>
    </citation>
    <scope>X-RAY CRYSTALLOGRAPHY (1.90 ANGSTROMS) IN 6S PICLN-SM COMPLEX</scope>
    <scope>IDENTIFICATION IN 6S PICLN-SM COMPLEX</scope>
    <scope>FUNCTION IN CORE U1 SNRNP BIOGENESIS</scope>
</reference>
<reference evidence="22" key="17">
    <citation type="journal article" date="2015" name="Elife">
        <title>Crystal structure of human U1 snRNP, a small nuclear ribonucleoprotein particle, reveals the mechanism of 5' splice site recognition.</title>
        <authorList>
            <person name="Kondo Y."/>
            <person name="Oubridge C."/>
            <person name="van Roon A.M."/>
            <person name="Nagai K."/>
        </authorList>
    </citation>
    <scope>X-RAY CRYSTALLOGRAPHY (3.30 ANGSTROMS)</scope>
    <scope>SUBUNIT</scope>
</reference>
<reference evidence="21" key="18">
    <citation type="journal article" date="2016" name="Science">
        <title>Molecular architecture of the human U4/U6.U5 tri-snRNP.</title>
        <authorList>
            <person name="Agafonov D.E."/>
            <person name="Kastner B."/>
            <person name="Dybkov O."/>
            <person name="Hofele R.V."/>
            <person name="Liu W.T."/>
            <person name="Urlaub H."/>
            <person name="Luhrmann R."/>
            <person name="Stark H."/>
        </authorList>
    </citation>
    <scope>STRUCTURE BY ELECTRON MICROSCOPY (7.00 ANGSTROMS)</scope>
    <scope>SUBCELLULAR LOCATION</scope>
    <scope>SUBUNIT</scope>
    <scope>IDENTIFICATION BY MASS SPECTROMETRY</scope>
</reference>
<reference evidence="25" key="19">
    <citation type="journal article" date="2017" name="Cell">
        <title>An Atomic Structure of the Human Spliceosome.</title>
        <authorList>
            <person name="Zhang X."/>
            <person name="Yan C."/>
            <person name="Hang J."/>
            <person name="Finci L.I."/>
            <person name="Lei J."/>
            <person name="Shi Y."/>
        </authorList>
    </citation>
    <scope>STRUCTURE BY ELECTRON MICROSCOPY (3.60 ANGSTROMS)</scope>
    <scope>FUNCTION</scope>
    <scope>SUBCELLULAR LOCATION</scope>
    <scope>SUBUNIT</scope>
</reference>
<reference evidence="24" key="20">
    <citation type="journal article" date="2017" name="Cell">
        <title>Cryo-EM Structure of a Pre-catalytic Human Spliceosome Primed for Activation.</title>
        <authorList>
            <person name="Bertram K."/>
            <person name="Agafonov D.E."/>
            <person name="Dybkov O."/>
            <person name="Haselbach D."/>
            <person name="Leelaram M.N."/>
            <person name="Will C.L."/>
            <person name="Urlaub H."/>
            <person name="Kastner B."/>
            <person name="Luhrmann R."/>
            <person name="Stark H."/>
        </authorList>
    </citation>
    <scope>STRUCTURE BY ELECTRON MICROSCOPY (4.50 ANGSTROMS)</scope>
    <scope>FUNCTION</scope>
    <scope>SUBCELLULAR LOCATION</scope>
    <scope>SUBUNIT</scope>
    <scope>IDENTIFICATION BY MASS SPECTROMETRY</scope>
</reference>
<reference evidence="23" key="21">
    <citation type="journal article" date="2017" name="Nature">
        <title>Cryo-EM structure of a human spliceosome activated for step 2 of splicing.</title>
        <authorList>
            <person name="Bertram K."/>
            <person name="Agafonov D.E."/>
            <person name="Liu W.T."/>
            <person name="Dybkov O."/>
            <person name="Will C.L."/>
            <person name="Hartmuth K."/>
            <person name="Urlaub H."/>
            <person name="Kastner B."/>
            <person name="Stark H."/>
            <person name="Luhrmann R."/>
        </authorList>
    </citation>
    <scope>STRUCTURE BY ELECTRON MICROSCOPY (5.90 ANGSTROMS)</scope>
    <scope>FUNCTION</scope>
    <scope>SUBCELLULAR LOCATION</scope>
    <scope>SUBUNIT</scope>
    <scope>IDENTIFICATION BY MASS SPECTROMETRY</scope>
</reference>
<reference evidence="27 28" key="22">
    <citation type="journal article" date="2020" name="Nucleic Acids Res.">
        <title>Negative cooperativity between Gemin2 and RNA provides insights into RNA selection and the SMN complex's release in snRNP assembly.</title>
        <authorList>
            <person name="Yi H."/>
            <person name="Mu L."/>
            <person name="Shen C."/>
            <person name="Kong X."/>
            <person name="Wang Y."/>
            <person name="Hou Y."/>
            <person name="Zhang R."/>
        </authorList>
    </citation>
    <scope>X-RAY CRYSTALLOGRAPHY (3.12 ANGSTROMS) IN COMPLEX WITH GEMIN2; SNRPD1; SNRPD2; SNRPE; SNRPF AND SMN1</scope>
    <scope>INTERACTION WITH SNRPE</scope>
</reference>
<reference evidence="29" key="23">
    <citation type="journal article" date="2020" name="Nature">
        <title>Molecular architecture of the human 17S U2 snRNP.</title>
        <authorList>
            <person name="Zhang Z."/>
            <person name="Will C.L."/>
            <person name="Bertram K."/>
            <person name="Dybkov O."/>
            <person name="Hartmuth K."/>
            <person name="Agafonov D.E."/>
            <person name="Hofele R."/>
            <person name="Urlaub H."/>
            <person name="Kastner B."/>
            <person name="Luehrmann R."/>
            <person name="Stark H."/>
        </authorList>
    </citation>
    <scope>STRUCTURE BY ELECTRON MICROSCOPY (4.10 ANGSTROMS) IN COMPLEX WITH THE 17S U2 SNRNP COMPLEX</scope>
    <scope>FUNCTION</scope>
    <scope>IDENTIFICATION IN THE 17S U2 SNRNP COMPLEX</scope>
</reference>
<reference evidence="30" key="24">
    <citation type="journal article" date="2021" name="Science">
        <title>Structure of the activated human minor spliceosome.</title>
        <authorList>
            <person name="Bai R."/>
            <person name="Wan R."/>
            <person name="Wang L."/>
            <person name="Xu K."/>
            <person name="Zhang Q."/>
            <person name="Lei J."/>
            <person name="Shi Y."/>
        </authorList>
    </citation>
    <scope>STRUCTURE BY ELECTRON MICROSCOPY (2.89 ANGSTROMS)</scope>
    <scope>SUBUNIT</scope>
</reference>
<reference evidence="31" key="25">
    <citation type="journal article" date="2023" name="Nat. Commun.">
        <title>Mechanisms of the RNA helicases DDX42 and DDX46 in human U2 snRNP assembly.</title>
        <authorList>
            <person name="Yang F."/>
            <person name="Bian T."/>
            <person name="Zhan X."/>
            <person name="Chen Z."/>
            <person name="Xing Z."/>
            <person name="Larsen N.A."/>
            <person name="Zhang X."/>
            <person name="Shi Y."/>
        </authorList>
    </citation>
    <scope>STRUCTURE BY ELECTRON MICROSCOPY (2.70 ANGSTROMS) IN COMPLEX WITH THE 17S U2 SNRNP COMPLEX</scope>
    <scope>IDENTIFICATION IN THE 17S U2 SNRNP COMPLEX</scope>
</reference>
<evidence type="ECO:0000255" key="1">
    <source>
        <dbReference type="PROSITE-ProRule" id="PRU01346"/>
    </source>
</evidence>
<evidence type="ECO:0000269" key="2">
    <source>
    </source>
</evidence>
<evidence type="ECO:0000269" key="3">
    <source>
    </source>
</evidence>
<evidence type="ECO:0000269" key="4">
    <source>
    </source>
</evidence>
<evidence type="ECO:0000269" key="5">
    <source>
    </source>
</evidence>
<evidence type="ECO:0000269" key="6">
    <source>
    </source>
</evidence>
<evidence type="ECO:0000269" key="7">
    <source>
    </source>
</evidence>
<evidence type="ECO:0000269" key="8">
    <source>
    </source>
</evidence>
<evidence type="ECO:0000269" key="9">
    <source>
    </source>
</evidence>
<evidence type="ECO:0000269" key="10">
    <source>
    </source>
</evidence>
<evidence type="ECO:0000269" key="11">
    <source>
    </source>
</evidence>
<evidence type="ECO:0000269" key="12">
    <source>
    </source>
</evidence>
<evidence type="ECO:0000269" key="13">
    <source>
    </source>
</evidence>
<evidence type="ECO:0000269" key="14">
    <source>
    </source>
</evidence>
<evidence type="ECO:0000269" key="15">
    <source>
    </source>
</evidence>
<evidence type="ECO:0000269" key="16">
    <source>
    </source>
</evidence>
<evidence type="ECO:0000269" key="17">
    <source>
    </source>
</evidence>
<evidence type="ECO:0000269" key="18">
    <source>
    </source>
</evidence>
<evidence type="ECO:0000269" key="19">
    <source>
    </source>
</evidence>
<evidence type="ECO:0000305" key="20"/>
<evidence type="ECO:0007744" key="21">
    <source>
        <dbReference type="PDB" id="3JCR"/>
    </source>
</evidence>
<evidence type="ECO:0007744" key="22">
    <source>
        <dbReference type="PDB" id="4PJO"/>
    </source>
</evidence>
<evidence type="ECO:0007744" key="23">
    <source>
        <dbReference type="PDB" id="5MQF"/>
    </source>
</evidence>
<evidence type="ECO:0007744" key="24">
    <source>
        <dbReference type="PDB" id="5O9Z"/>
    </source>
</evidence>
<evidence type="ECO:0007744" key="25">
    <source>
        <dbReference type="PDB" id="5XJC"/>
    </source>
</evidence>
<evidence type="ECO:0007744" key="26">
    <source>
        <dbReference type="PDB" id="5XJL"/>
    </source>
</evidence>
<evidence type="ECO:0007744" key="27">
    <source>
        <dbReference type="PDB" id="5XJQ"/>
    </source>
</evidence>
<evidence type="ECO:0007744" key="28">
    <source>
        <dbReference type="PDB" id="5XJR"/>
    </source>
</evidence>
<evidence type="ECO:0007744" key="29">
    <source>
        <dbReference type="PDB" id="6Y5Q"/>
    </source>
</evidence>
<evidence type="ECO:0007744" key="30">
    <source>
        <dbReference type="PDB" id="7DVQ"/>
    </source>
</evidence>
<evidence type="ECO:0007744" key="31">
    <source>
        <dbReference type="PDB" id="8HK1"/>
    </source>
</evidence>
<evidence type="ECO:0007829" key="32">
    <source>
        <dbReference type="PDB" id="5XJL"/>
    </source>
</evidence>
<evidence type="ECO:0007829" key="33">
    <source>
        <dbReference type="PDB" id="7EVO"/>
    </source>
</evidence>
<keyword id="KW-0002">3D-structure</keyword>
<keyword id="KW-0963">Cytoplasm</keyword>
<keyword id="KW-0507">mRNA processing</keyword>
<keyword id="KW-0508">mRNA splicing</keyword>
<keyword id="KW-0539">Nucleus</keyword>
<keyword id="KW-1267">Proteomics identification</keyword>
<keyword id="KW-1185">Reference proteome</keyword>
<keyword id="KW-0687">Ribonucleoprotein</keyword>
<keyword id="KW-0694">RNA-binding</keyword>
<keyword id="KW-0747">Spliceosome</keyword>
<accession>P62308</accession>
<accession>D6W5G6</accession>
<accession>Q15357</accession>
<accession>Q6IB86</accession>
<protein>
    <recommendedName>
        <fullName>Small nuclear ribonucleoprotein G</fullName>
        <shortName>snRNP-G</shortName>
    </recommendedName>
    <alternativeName>
        <fullName>Sm protein G</fullName>
        <shortName>Sm-G</shortName>
        <shortName>SmG</shortName>
    </alternativeName>
</protein>
<sequence>MSKAHPPELKKFMDKKLSLKLNGGRHVQGILRGFDPFMNLVIDECVEMATSGQQNNIGMVVIRGNSIIMLEALERV</sequence>
<name>RUXG_HUMAN</name>
<feature type="chain" id="PRO_0000125545" description="Small nuclear ribonucleoprotein G">
    <location>
        <begin position="1"/>
        <end position="76"/>
    </location>
</feature>
<feature type="domain" description="Sm" evidence="1">
    <location>
        <begin position="4"/>
        <end position="76"/>
    </location>
</feature>
<feature type="helix" evidence="32">
    <location>
        <begin position="9"/>
        <end position="12"/>
    </location>
</feature>
<feature type="strand" evidence="32">
    <location>
        <begin position="16"/>
        <end position="21"/>
    </location>
</feature>
<feature type="turn" evidence="32">
    <location>
        <begin position="22"/>
        <end position="24"/>
    </location>
</feature>
<feature type="strand" evidence="32">
    <location>
        <begin position="25"/>
        <end position="34"/>
    </location>
</feature>
<feature type="strand" evidence="32">
    <location>
        <begin position="40"/>
        <end position="47"/>
    </location>
</feature>
<feature type="strand" evidence="33">
    <location>
        <begin position="50"/>
        <end position="52"/>
    </location>
</feature>
<feature type="strand" evidence="32">
    <location>
        <begin position="56"/>
        <end position="62"/>
    </location>
</feature>
<feature type="turn" evidence="32">
    <location>
        <begin position="64"/>
        <end position="66"/>
    </location>
</feature>
<feature type="strand" evidence="32">
    <location>
        <begin position="67"/>
        <end position="71"/>
    </location>
</feature>
<comment type="function">
    <text evidence="3 4 5 6 7 10 11 12 13 14 15 17">Plays a role in pre-mRNA splicing as a core component of the spliceosomal U1, U2, U4 and U5 small nuclear ribonucleoproteins (snRNPs), the building blocks of the spliceosome (PubMed:11991638, PubMed:18984161, PubMed:19325628, PubMed:23333303, PubMed:25555158, PubMed:26912367, PubMed:28076346, PubMed:28502770, PubMed:28781166, PubMed:32494006). Component of both the pre-catalytic spliceosome B complex and activated spliceosome C complexes (PubMed:11991638, PubMed:28076346, PubMed:28502770, PubMed:28781166). As a component of the minor spliceosome, involved in the splicing of U12-type introns in pre-mRNAs (PubMed:15146077). As part of the U7 snRNP it is involved in histone 3'-end processing (PubMed:12975319).</text>
</comment>
<comment type="subunit">
    <text evidence="2 3 4 5 6 7 8 9 10 11 12 13 14 15 16 17 18 19">Core component of the spliceosomal U1, U2, U4 and U5 small nuclear ribonucleoproteins (snRNPs), the building blocks of the spliceosome (PubMed:11991638, PubMed:19325628, PubMed:21516107, PubMed:25555158, PubMed:26912367, PubMed:28076346, PubMed:28502770, PubMed:28781166, PubMed:32494006, PubMed:36797247). Most spliceosomal snRNPs contain a common set of Sm proteins, SNRPB, SNRPD1, SNRPD2, SNRPD3, SNRPE, SNRPF and SNRPG that assemble in a heptameric protein ring on the Sm site of the small nuclear RNA to form the core snRNP (PubMed:19325628, PubMed:21516107, PubMed:25555158, PubMed:26912367, PubMed:28076346, PubMed:28502770, PubMed:28781166). Component of the U1 snRNP (PubMed:19325628, PubMed:25555158). The U1 snRNP is composed of the U1 snRNA and the 7 core Sm proteins SNRPB, SNRPD1, SNRPD2, SNRPD3, SNRPE, SNRPF and SNRPG, and at least three U1 snRNP-specific proteins SNRNP70/U1-70K, SNRPA/U1-A and SNRPC/U1-C (PubMed:19325628, PubMed:25555158). Component of the U4/U6-U5 tri-snRNP complex composed of the U4, U6 and U5 snRNAs and at least PRPF3, PRPF4, PRPF6, PRPF8, PRPF31, SNRNP200, TXNL4A, SNRNP40, SNRPB, SNRPD1, SNRPD2, SNRPD3, SNRPE, SNRPF, SNRPG, DDX23, CD2BP2, PPIH, SNU13, EFTUD2, SART1 and USP39, plus LSM2, LSM3, LSM4, LSM5, LSM6, LSM7 and LSM8 (PubMed:26912367). Component of the U7 snRNP complex, or U7 Sm protein core complex, that is composed of the U7 snRNA and at least LSM10, LSM11, SNRPB, SNRPD3, SNRPE, SNRPF and SNRPG; the complex does not contain SNRPD1 and SNRPD2 (PubMed:11574479, PubMed:12975319). Component of the minor spliceosome, which splices U12-type introns (PubMed:15146077, PubMed:33509932). Part of the SMN-Sm complex that contains SMN1, GEMIN2/SIP1, DDX20/GEMIN3, GEMIN4, GEMIN5, GEMIN6, GEMIN7, GEMIN8, STRAP/UNRIP and the Sm proteins SNRPB, SNRPD1, SNRPD2, SNRPD3, SNRPE, SNRPF and SNRPG; catalyzes core snRNPs assembly (PubMed:16314521, PubMed:18984161). Forms a 6S pICln-Sm complex composed of CLNS1A/pICln, SNRPD1, SNRPD2, SNRPE, SNRPF and SNRPG; ring-like structure where CLNS1A/pICln mimics additional Sm proteins and which is unable to assemble into the core snRNP (PubMed:18984161, PubMed:23333303). Interacts with GEMIN2 (via N-terminus); the interaction is direct (PubMed:21816274). Interacts with SNRPE; the interaction is direct (PubMed:21816274, PubMed:31799625).</text>
</comment>
<comment type="interaction">
    <interactant intactId="EBI-624585">
        <id>P62308</id>
    </interactant>
    <interactant intactId="EBI-724693">
        <id>P54105</id>
        <label>CLNS1A</label>
    </interactant>
    <organismsDiffer>false</organismsDiffer>
    <experiments>11</experiments>
</comment>
<comment type="interaction">
    <interactant intactId="EBI-624585">
        <id>P62308</id>
    </interactant>
    <interactant intactId="EBI-742054">
        <id>Q96D03</id>
        <label>DDIT4L</label>
    </interactant>
    <organismsDiffer>false</organismsDiffer>
    <experiments>13</experiments>
</comment>
<comment type="interaction">
    <interactant intactId="EBI-624585">
        <id>P62308</id>
    </interactant>
    <interactant intactId="EBI-741101">
        <id>Q13643</id>
        <label>FHL3</label>
    </interactant>
    <organismsDiffer>false</organismsDiffer>
    <experiments>6</experiments>
</comment>
<comment type="interaction">
    <interactant intactId="EBI-624585">
        <id>P62308</id>
    </interactant>
    <interactant intactId="EBI-9088619">
        <id>Q06547-3</id>
        <label>GABPB1</label>
    </interactant>
    <organismsDiffer>false</organismsDiffer>
    <experiments>3</experiments>
</comment>
<comment type="interaction">
    <interactant intactId="EBI-624585">
        <id>P62308</id>
    </interactant>
    <interactant intactId="EBI-752301">
        <id>Q8WXD5</id>
        <label>GEMIN6</label>
    </interactant>
    <organismsDiffer>false</organismsDiffer>
    <experiments>3</experiments>
</comment>
<comment type="interaction">
    <interactant intactId="EBI-624585">
        <id>P62308</id>
    </interactant>
    <interactant intactId="EBI-12305293">
        <id>Q8NCF5-2</id>
        <label>NFATC2IP</label>
    </interactant>
    <organismsDiffer>false</organismsDiffer>
    <experiments>3</experiments>
</comment>
<comment type="interaction">
    <interactant intactId="EBI-624585">
        <id>P62308</id>
    </interactant>
    <interactant intactId="EBI-2462271">
        <id>Q15428</id>
        <label>SF3A2</label>
    </interactant>
    <organismsDiffer>false</organismsDiffer>
    <experiments>2</experiments>
</comment>
<comment type="interaction">
    <interactant intactId="EBI-624585">
        <id>P62308</id>
    </interactant>
    <interactant intactId="EBI-348082">
        <id>P62304</id>
        <label>SNRPE</label>
    </interactant>
    <organismsDiffer>false</organismsDiffer>
    <experiments>11</experiments>
</comment>
<comment type="interaction">
    <interactant intactId="EBI-624585">
        <id>P62308</id>
    </interactant>
    <interactant intactId="EBI-356900">
        <id>P62306</id>
        <label>SNRPF</label>
    </interactant>
    <organismsDiffer>false</organismsDiffer>
    <experiments>3</experiments>
</comment>
<comment type="interaction">
    <interactant intactId="EBI-624585">
        <id>P62308</id>
    </interactant>
    <interactant intactId="EBI-624252">
        <id>O75410-1</id>
        <label>TACC1</label>
    </interactant>
    <organismsDiffer>false</organismsDiffer>
    <experiments>5</experiments>
</comment>
<comment type="interaction">
    <interactant intactId="EBI-624585">
        <id>P62308</id>
    </interactant>
    <interactant intactId="EBI-727338">
        <id>O95988</id>
        <label>TCL1B</label>
    </interactant>
    <organismsDiffer>false</organismsDiffer>
    <experiments>3</experiments>
</comment>
<comment type="interaction">
    <interactant intactId="EBI-624585">
        <id>P62308</id>
    </interactant>
    <interactant intactId="EBI-4314702">
        <id>Q03403</id>
        <label>TFF2</label>
    </interactant>
    <organismsDiffer>false</organismsDiffer>
    <experiments>3</experiments>
</comment>
<comment type="subcellular location">
    <subcellularLocation>
        <location evidence="6">Cytoplasm</location>
        <location evidence="6">Cytosol</location>
    </subcellularLocation>
    <subcellularLocation>
        <location evidence="2 3 12 13 14 15">Nucleus</location>
    </subcellularLocation>
    <text evidence="20">SMN-mediated assembly into core snRNPs occurs in the cytosol before SMN-mediated transport to the nucleus to be included in spliceosomes.</text>
</comment>
<comment type="similarity">
    <text evidence="20">Belongs to the snRNP Sm proteins family.</text>
</comment>
<organism>
    <name type="scientific">Homo sapiens</name>
    <name type="common">Human</name>
    <dbReference type="NCBI Taxonomy" id="9606"/>
    <lineage>
        <taxon>Eukaryota</taxon>
        <taxon>Metazoa</taxon>
        <taxon>Chordata</taxon>
        <taxon>Craniata</taxon>
        <taxon>Vertebrata</taxon>
        <taxon>Euteleostomi</taxon>
        <taxon>Mammalia</taxon>
        <taxon>Eutheria</taxon>
        <taxon>Euarchontoglires</taxon>
        <taxon>Primates</taxon>
        <taxon>Haplorrhini</taxon>
        <taxon>Catarrhini</taxon>
        <taxon>Hominidae</taxon>
        <taxon>Homo</taxon>
    </lineage>
</organism>
<proteinExistence type="evidence at protein level"/>